<proteinExistence type="inferred from homology"/>
<keyword id="KW-0028">Amino-acid biosynthesis</keyword>
<keyword id="KW-0198">Cysteine biosynthesis</keyword>
<keyword id="KW-0249">Electron transport</keyword>
<keyword id="KW-0274">FAD</keyword>
<keyword id="KW-0285">Flavoprotein</keyword>
<keyword id="KW-0288">FMN</keyword>
<keyword id="KW-0521">NADP</keyword>
<keyword id="KW-0560">Oxidoreductase</keyword>
<keyword id="KW-1185">Reference proteome</keyword>
<keyword id="KW-0813">Transport</keyword>
<protein>
    <recommendedName>
        <fullName evidence="1">Sulfite reductase [NADPH] flavoprotein alpha-component</fullName>
        <shortName evidence="1">SiR-FP</shortName>
        <ecNumber evidence="1">1.8.1.2</ecNumber>
    </recommendedName>
</protein>
<organism>
    <name type="scientific">Buchnera aphidicola subsp. Acyrthosiphon pisum (strain APS)</name>
    <name type="common">Acyrthosiphon pisum symbiotic bacterium</name>
    <dbReference type="NCBI Taxonomy" id="107806"/>
    <lineage>
        <taxon>Bacteria</taxon>
        <taxon>Pseudomonadati</taxon>
        <taxon>Pseudomonadota</taxon>
        <taxon>Gammaproteobacteria</taxon>
        <taxon>Enterobacterales</taxon>
        <taxon>Erwiniaceae</taxon>
        <taxon>Buchnera</taxon>
    </lineage>
</organism>
<feature type="chain" id="PRO_0000199920" description="Sulfite reductase [NADPH] flavoprotein alpha-component">
    <location>
        <begin position="1"/>
        <end position="601"/>
    </location>
</feature>
<feature type="domain" description="Flavodoxin-like" evidence="1">
    <location>
        <begin position="65"/>
        <end position="203"/>
    </location>
</feature>
<feature type="domain" description="FAD-binding FR-type" evidence="1">
    <location>
        <begin position="236"/>
        <end position="450"/>
    </location>
</feature>
<feature type="binding site" evidence="1">
    <location>
        <begin position="71"/>
        <end position="76"/>
    </location>
    <ligand>
        <name>FMN</name>
        <dbReference type="ChEBI" id="CHEBI:58210"/>
    </ligand>
</feature>
<feature type="binding site" evidence="1">
    <location>
        <begin position="118"/>
        <end position="121"/>
    </location>
    <ligand>
        <name>FMN</name>
        <dbReference type="ChEBI" id="CHEBI:58210"/>
    </ligand>
</feature>
<feature type="binding site" evidence="1">
    <location>
        <begin position="154"/>
        <end position="163"/>
    </location>
    <ligand>
        <name>FMN</name>
        <dbReference type="ChEBI" id="CHEBI:58210"/>
    </ligand>
</feature>
<feature type="binding site" evidence="1">
    <location>
        <position position="324"/>
    </location>
    <ligand>
        <name>FAD</name>
        <dbReference type="ChEBI" id="CHEBI:57692"/>
    </ligand>
</feature>
<feature type="binding site" evidence="1">
    <location>
        <position position="358"/>
    </location>
    <ligand>
        <name>FAD</name>
        <dbReference type="ChEBI" id="CHEBI:57692"/>
    </ligand>
</feature>
<feature type="binding site" evidence="1">
    <location>
        <begin position="388"/>
        <end position="391"/>
    </location>
    <ligand>
        <name>FAD</name>
        <dbReference type="ChEBI" id="CHEBI:57692"/>
    </ligand>
</feature>
<feature type="binding site" evidence="1">
    <location>
        <begin position="406"/>
        <end position="408"/>
    </location>
    <ligand>
        <name>FAD</name>
        <dbReference type="ChEBI" id="CHEBI:57692"/>
    </ligand>
</feature>
<feature type="binding site" evidence="1">
    <location>
        <begin position="421"/>
        <end position="424"/>
    </location>
    <ligand>
        <name>FAD</name>
        <dbReference type="ChEBI" id="CHEBI:57692"/>
    </ligand>
</feature>
<feature type="binding site" evidence="1">
    <location>
        <begin position="521"/>
        <end position="522"/>
    </location>
    <ligand>
        <name>NADP(+)</name>
        <dbReference type="ChEBI" id="CHEBI:58349"/>
    </ligand>
</feature>
<feature type="binding site" evidence="1">
    <location>
        <begin position="527"/>
        <end position="531"/>
    </location>
    <ligand>
        <name>NADP(+)</name>
        <dbReference type="ChEBI" id="CHEBI:58349"/>
    </ligand>
</feature>
<feature type="binding site" evidence="1">
    <location>
        <position position="563"/>
    </location>
    <ligand>
        <name>NADP(+)</name>
        <dbReference type="ChEBI" id="CHEBI:58349"/>
    </ligand>
</feature>
<feature type="binding site" evidence="1">
    <location>
        <position position="601"/>
    </location>
    <ligand>
        <name>FAD</name>
        <dbReference type="ChEBI" id="CHEBI:57692"/>
    </ligand>
</feature>
<gene>
    <name evidence="1" type="primary">cysJ</name>
    <name type="ordered locus">BU428</name>
</gene>
<evidence type="ECO:0000255" key="1">
    <source>
        <dbReference type="HAMAP-Rule" id="MF_01541"/>
    </source>
</evidence>
<dbReference type="EC" id="1.8.1.2" evidence="1"/>
<dbReference type="EMBL" id="BA000003">
    <property type="protein sequence ID" value="BAB13126.1"/>
    <property type="molecule type" value="Genomic_DNA"/>
</dbReference>
<dbReference type="RefSeq" id="NP_240240.1">
    <property type="nucleotide sequence ID" value="NC_002528.1"/>
</dbReference>
<dbReference type="RefSeq" id="WP_010896111.1">
    <property type="nucleotide sequence ID" value="NC_002528.1"/>
</dbReference>
<dbReference type="SMR" id="P57503"/>
<dbReference type="STRING" id="563178.BUAP5A_421"/>
<dbReference type="EnsemblBacteria" id="BAB13126">
    <property type="protein sequence ID" value="BAB13126"/>
    <property type="gene ID" value="BAB13126"/>
</dbReference>
<dbReference type="KEGG" id="buc:BU428"/>
<dbReference type="PATRIC" id="fig|107806.10.peg.437"/>
<dbReference type="eggNOG" id="COG0369">
    <property type="taxonomic scope" value="Bacteria"/>
</dbReference>
<dbReference type="HOGENOM" id="CLU_001570_17_7_6"/>
<dbReference type="UniPathway" id="UPA00140">
    <property type="reaction ID" value="UER00207"/>
</dbReference>
<dbReference type="Proteomes" id="UP000001806">
    <property type="component" value="Chromosome"/>
</dbReference>
<dbReference type="GO" id="GO:0005829">
    <property type="term" value="C:cytosol"/>
    <property type="evidence" value="ECO:0007669"/>
    <property type="project" value="TreeGrafter"/>
</dbReference>
<dbReference type="GO" id="GO:0050660">
    <property type="term" value="F:flavin adenine dinucleotide binding"/>
    <property type="evidence" value="ECO:0007669"/>
    <property type="project" value="InterPro"/>
</dbReference>
<dbReference type="GO" id="GO:0010181">
    <property type="term" value="F:FMN binding"/>
    <property type="evidence" value="ECO:0007669"/>
    <property type="project" value="InterPro"/>
</dbReference>
<dbReference type="GO" id="GO:0004783">
    <property type="term" value="F:sulfite reductase (NADPH) activity"/>
    <property type="evidence" value="ECO:0007669"/>
    <property type="project" value="UniProtKB-UniRule"/>
</dbReference>
<dbReference type="GO" id="GO:0019344">
    <property type="term" value="P:cysteine biosynthetic process"/>
    <property type="evidence" value="ECO:0007669"/>
    <property type="project" value="UniProtKB-KW"/>
</dbReference>
<dbReference type="GO" id="GO:0070814">
    <property type="term" value="P:hydrogen sulfide biosynthetic process"/>
    <property type="evidence" value="ECO:0007669"/>
    <property type="project" value="UniProtKB-UniRule"/>
</dbReference>
<dbReference type="GO" id="GO:0000103">
    <property type="term" value="P:sulfate assimilation"/>
    <property type="evidence" value="ECO:0007669"/>
    <property type="project" value="UniProtKB-UniRule"/>
</dbReference>
<dbReference type="CDD" id="cd06199">
    <property type="entry name" value="SiR"/>
    <property type="match status" value="1"/>
</dbReference>
<dbReference type="FunFam" id="3.40.50.80:FF:000001">
    <property type="entry name" value="NADPH--cytochrome P450 reductase 1"/>
    <property type="match status" value="1"/>
</dbReference>
<dbReference type="Gene3D" id="3.40.50.360">
    <property type="match status" value="1"/>
</dbReference>
<dbReference type="Gene3D" id="1.20.990.10">
    <property type="entry name" value="NADPH-cytochrome p450 Reductase, Chain A, domain 3"/>
    <property type="match status" value="1"/>
</dbReference>
<dbReference type="Gene3D" id="3.40.50.80">
    <property type="entry name" value="Nucleotide-binding domain of ferredoxin-NADP reductase (FNR) module"/>
    <property type="match status" value="1"/>
</dbReference>
<dbReference type="Gene3D" id="2.40.30.10">
    <property type="entry name" value="Translation factors"/>
    <property type="match status" value="1"/>
</dbReference>
<dbReference type="HAMAP" id="MF_01541">
    <property type="entry name" value="CysJ"/>
    <property type="match status" value="1"/>
</dbReference>
<dbReference type="InterPro" id="IPR010199">
    <property type="entry name" value="CysJ"/>
</dbReference>
<dbReference type="InterPro" id="IPR003097">
    <property type="entry name" value="CysJ-like_FAD-binding"/>
</dbReference>
<dbReference type="InterPro" id="IPR029758">
    <property type="entry name" value="CysJ_Proteobact"/>
</dbReference>
<dbReference type="InterPro" id="IPR017927">
    <property type="entry name" value="FAD-bd_FR_type"/>
</dbReference>
<dbReference type="InterPro" id="IPR001094">
    <property type="entry name" value="Flavdoxin-like"/>
</dbReference>
<dbReference type="InterPro" id="IPR008254">
    <property type="entry name" value="Flavodoxin/NO_synth"/>
</dbReference>
<dbReference type="InterPro" id="IPR001709">
    <property type="entry name" value="Flavoprot_Pyr_Nucl_cyt_Rdtase"/>
</dbReference>
<dbReference type="InterPro" id="IPR029039">
    <property type="entry name" value="Flavoprotein-like_sf"/>
</dbReference>
<dbReference type="InterPro" id="IPR039261">
    <property type="entry name" value="FNR_nucleotide-bd"/>
</dbReference>
<dbReference type="InterPro" id="IPR023173">
    <property type="entry name" value="NADPH_Cyt_P450_Rdtase_alpha"/>
</dbReference>
<dbReference type="InterPro" id="IPR001433">
    <property type="entry name" value="OxRdtase_FAD/NAD-bd"/>
</dbReference>
<dbReference type="InterPro" id="IPR017938">
    <property type="entry name" value="Riboflavin_synthase-like_b-brl"/>
</dbReference>
<dbReference type="NCBIfam" id="TIGR01931">
    <property type="entry name" value="cysJ"/>
    <property type="match status" value="1"/>
</dbReference>
<dbReference type="PANTHER" id="PTHR19384:SF128">
    <property type="entry name" value="NADPH OXIDOREDUCTASE A"/>
    <property type="match status" value="1"/>
</dbReference>
<dbReference type="PANTHER" id="PTHR19384">
    <property type="entry name" value="NITRIC OXIDE SYNTHASE-RELATED"/>
    <property type="match status" value="1"/>
</dbReference>
<dbReference type="Pfam" id="PF00667">
    <property type="entry name" value="FAD_binding_1"/>
    <property type="match status" value="1"/>
</dbReference>
<dbReference type="Pfam" id="PF00258">
    <property type="entry name" value="Flavodoxin_1"/>
    <property type="match status" value="1"/>
</dbReference>
<dbReference type="Pfam" id="PF00175">
    <property type="entry name" value="NAD_binding_1"/>
    <property type="match status" value="1"/>
</dbReference>
<dbReference type="PIRSF" id="PIRSF000207">
    <property type="entry name" value="SiR-FP_CysJ"/>
    <property type="match status" value="1"/>
</dbReference>
<dbReference type="PRINTS" id="PR00369">
    <property type="entry name" value="FLAVODOXIN"/>
</dbReference>
<dbReference type="PRINTS" id="PR00371">
    <property type="entry name" value="FPNCR"/>
</dbReference>
<dbReference type="SUPFAM" id="SSF52343">
    <property type="entry name" value="Ferredoxin reductase-like, C-terminal NADP-linked domain"/>
    <property type="match status" value="1"/>
</dbReference>
<dbReference type="SUPFAM" id="SSF52218">
    <property type="entry name" value="Flavoproteins"/>
    <property type="match status" value="1"/>
</dbReference>
<dbReference type="SUPFAM" id="SSF63380">
    <property type="entry name" value="Riboflavin synthase domain-like"/>
    <property type="match status" value="1"/>
</dbReference>
<dbReference type="PROSITE" id="PS51384">
    <property type="entry name" value="FAD_FR"/>
    <property type="match status" value="1"/>
</dbReference>
<dbReference type="PROSITE" id="PS50902">
    <property type="entry name" value="FLAVODOXIN_LIKE"/>
    <property type="match status" value="1"/>
</dbReference>
<comment type="function">
    <text evidence="1">Component of the sulfite reductase complex that catalyzes the 6-electron reduction of sulfite to sulfide. This is one of several activities required for the biosynthesis of L-cysteine from sulfate. The flavoprotein component catalyzes the electron flow from NADPH -&gt; FAD -&gt; FMN to the hemoprotein component.</text>
</comment>
<comment type="catalytic activity">
    <reaction evidence="1">
        <text>hydrogen sulfide + 3 NADP(+) + 3 H2O = sulfite + 3 NADPH + 4 H(+)</text>
        <dbReference type="Rhea" id="RHEA:13801"/>
        <dbReference type="ChEBI" id="CHEBI:15377"/>
        <dbReference type="ChEBI" id="CHEBI:15378"/>
        <dbReference type="ChEBI" id="CHEBI:17359"/>
        <dbReference type="ChEBI" id="CHEBI:29919"/>
        <dbReference type="ChEBI" id="CHEBI:57783"/>
        <dbReference type="ChEBI" id="CHEBI:58349"/>
        <dbReference type="EC" id="1.8.1.2"/>
    </reaction>
</comment>
<comment type="cofactor">
    <cofactor evidence="1">
        <name>FAD</name>
        <dbReference type="ChEBI" id="CHEBI:57692"/>
    </cofactor>
    <text evidence="1">Binds 1 FAD per subunit.</text>
</comment>
<comment type="cofactor">
    <cofactor evidence="1">
        <name>FMN</name>
        <dbReference type="ChEBI" id="CHEBI:58210"/>
    </cofactor>
    <text evidence="1">Binds 1 FMN per subunit.</text>
</comment>
<comment type="pathway">
    <text evidence="1">Sulfur metabolism; hydrogen sulfide biosynthesis; hydrogen sulfide from sulfite (NADPH route): step 1/1.</text>
</comment>
<comment type="subunit">
    <text evidence="1">Alpha(8)-beta(8). The alpha component is a flavoprotein, the beta component is a hemoprotein.</text>
</comment>
<comment type="similarity">
    <text evidence="1">Belongs to the NADPH-dependent sulphite reductase flavoprotein subunit CysJ family.</text>
</comment>
<comment type="similarity">
    <text evidence="1">In the N-terminal section; belongs to the flavodoxin family.</text>
</comment>
<comment type="similarity">
    <text evidence="1">In the C-terminal section; belongs to the flavoprotein pyridine nucleotide cytochrome reductase family.</text>
</comment>
<accession>P57503</accession>
<reference key="1">
    <citation type="journal article" date="2000" name="Nature">
        <title>Genome sequence of the endocellular bacterial symbiont of aphids Buchnera sp. APS.</title>
        <authorList>
            <person name="Shigenobu S."/>
            <person name="Watanabe H."/>
            <person name="Hattori M."/>
            <person name="Sakaki Y."/>
            <person name="Ishikawa H."/>
        </authorList>
    </citation>
    <scope>NUCLEOTIDE SEQUENCE [LARGE SCALE GENOMIC DNA]</scope>
    <source>
        <strain>APS</strain>
    </source>
</reference>
<sequence length="601" mass="69231">MKNQNKFDPVFPLSSEQLNNLKELERTCTNIQSAWLSGYFWKIANQTSNITSFQTNESEKNDPVITIISASQTGNAKLLSKRLYEYFNKNNKISRLIDAMDYKFKKIKDEKILILIISTQGEGEPPEEALSFYKFIMSKNAPNLNNLYYSVFGLGDTSYNLFCQAGKDFDKRFKELGGNSLLDRFDADIEYEDNYNKWSQDLLQSINSKEKIYKSSVSYIDQENTLILSKNHYTKKNPAEGIILTNQKITGRNSKKDVHHIEIDISNLNIKYSPGDALGVWYKNDSNLVKNILELLSINISETITIKNDVITIFDALQNHFELTNNTKNIIKSYANFSKNKFLKDIISNDSDLENYTINTPLIKMIHDHPLKLSSQQLIGLLRPLTPRLYSISSSQEEIDNEIHITVGVVKKLISGHVYLGGASGYLSQSLKSDDIIKIFIQTNDNFRLPINKNTPIIMISSGTGIAPFRAFMQQRDNDNADGKNWLFFGNPNFTEDFLYQVEWQKYIKKGLITNMNLAWSQDQKNKIYVQDRIRENSQEIWSWIEEGAQIYVCGNASKMAKDVEKALLDIISHNAHLNLEESQEFLNNLRLNKRYKRDVY</sequence>
<name>CYSJ_BUCAI</name>